<comment type="similarity">
    <text evidence="1">Belongs to the UPF0335 family.</text>
</comment>
<organism>
    <name type="scientific">Rickettsia prowazekii (strain Madrid E)</name>
    <dbReference type="NCBI Taxonomy" id="272947"/>
    <lineage>
        <taxon>Bacteria</taxon>
        <taxon>Pseudomonadati</taxon>
        <taxon>Pseudomonadota</taxon>
        <taxon>Alphaproteobacteria</taxon>
        <taxon>Rickettsiales</taxon>
        <taxon>Rickettsiaceae</taxon>
        <taxon>Rickettsieae</taxon>
        <taxon>Rickettsia</taxon>
        <taxon>typhus group</taxon>
    </lineage>
</organism>
<proteinExistence type="inferred from homology"/>
<feature type="chain" id="PRO_0000219932" description="UPF0335 protein RP113">
    <location>
        <begin position="1"/>
        <end position="78"/>
    </location>
</feature>
<accession>Q9ZE35</accession>
<gene>
    <name type="ordered locus">RP113</name>
</gene>
<keyword id="KW-1185">Reference proteome</keyword>
<name>Y113_RICPR</name>
<sequence>MSAVVVKEQLEQYISKIERLEEEKSDLAQEVKDIFQDAASHGFDVKAMKAILKLKKLDKNKLAEQDAMLELYRDTLGI</sequence>
<reference key="1">
    <citation type="journal article" date="1998" name="Nature">
        <title>The genome sequence of Rickettsia prowazekii and the origin of mitochondria.</title>
        <authorList>
            <person name="Andersson S.G.E."/>
            <person name="Zomorodipour A."/>
            <person name="Andersson J.O."/>
            <person name="Sicheritz-Ponten T."/>
            <person name="Alsmark U.C.M."/>
            <person name="Podowski R.M."/>
            <person name="Naeslund A.K."/>
            <person name="Eriksson A.-S."/>
            <person name="Winkler H.H."/>
            <person name="Kurland C.G."/>
        </authorList>
    </citation>
    <scope>NUCLEOTIDE SEQUENCE [LARGE SCALE GENOMIC DNA]</scope>
    <source>
        <strain>Madrid E</strain>
    </source>
</reference>
<protein>
    <recommendedName>
        <fullName evidence="1">UPF0335 protein RP113</fullName>
    </recommendedName>
</protein>
<dbReference type="EMBL" id="AJ235270">
    <property type="protein sequence ID" value="CAA14582.1"/>
    <property type="molecule type" value="Genomic_DNA"/>
</dbReference>
<dbReference type="PIR" id="G71720">
    <property type="entry name" value="G71720"/>
</dbReference>
<dbReference type="RefSeq" id="NP_220505.1">
    <property type="nucleotide sequence ID" value="NC_000963.1"/>
</dbReference>
<dbReference type="RefSeq" id="WP_004597146.1">
    <property type="nucleotide sequence ID" value="NC_000963.1"/>
</dbReference>
<dbReference type="SMR" id="Q9ZE35"/>
<dbReference type="STRING" id="272947.gene:17555196"/>
<dbReference type="EnsemblBacteria" id="CAA14582">
    <property type="protein sequence ID" value="CAA14582"/>
    <property type="gene ID" value="CAA14582"/>
</dbReference>
<dbReference type="KEGG" id="rpr:RP113"/>
<dbReference type="PATRIC" id="fig|272947.5.peg.115"/>
<dbReference type="eggNOG" id="COG3750">
    <property type="taxonomic scope" value="Bacteria"/>
</dbReference>
<dbReference type="HOGENOM" id="CLU_158651_4_0_5"/>
<dbReference type="OrthoDB" id="9813793at2"/>
<dbReference type="Proteomes" id="UP000002480">
    <property type="component" value="Chromosome"/>
</dbReference>
<dbReference type="GO" id="GO:0003677">
    <property type="term" value="F:DNA binding"/>
    <property type="evidence" value="ECO:0007669"/>
    <property type="project" value="InterPro"/>
</dbReference>
<dbReference type="HAMAP" id="MF_00797">
    <property type="entry name" value="UPF0335"/>
    <property type="match status" value="1"/>
</dbReference>
<dbReference type="InterPro" id="IPR018753">
    <property type="entry name" value="GapR-like"/>
</dbReference>
<dbReference type="InterPro" id="IPR046367">
    <property type="entry name" value="GapR-like_DNA-bd"/>
</dbReference>
<dbReference type="NCBIfam" id="NF010247">
    <property type="entry name" value="PRK13694.1"/>
    <property type="match status" value="1"/>
</dbReference>
<dbReference type="Pfam" id="PF10073">
    <property type="entry name" value="GapR_DNA-bd"/>
    <property type="match status" value="1"/>
</dbReference>
<evidence type="ECO:0000255" key="1">
    <source>
        <dbReference type="HAMAP-Rule" id="MF_00797"/>
    </source>
</evidence>